<proteinExistence type="evidence at transcript level"/>
<dbReference type="EC" id="2.7.11.1"/>
<dbReference type="EMBL" id="AF139639">
    <property type="protein sequence ID" value="AAD43303.1"/>
    <property type="molecule type" value="mRNA"/>
</dbReference>
<dbReference type="RefSeq" id="NP_001075525.1">
    <property type="nucleotide sequence ID" value="NM_001082056.1"/>
</dbReference>
<dbReference type="SMR" id="Q9XT18"/>
<dbReference type="FunCoup" id="Q9XT18">
    <property type="interactions" value="423"/>
</dbReference>
<dbReference type="STRING" id="9986.ENSOCUP00000038675"/>
<dbReference type="PaxDb" id="9986-ENSOCUP00000018052"/>
<dbReference type="Ensembl" id="ENSOCUT00000022391.3">
    <property type="protein sequence ID" value="ENSOCUP00000018052.1"/>
    <property type="gene ID" value="ENSOCUG00000014367.4"/>
</dbReference>
<dbReference type="GeneID" id="100008723"/>
<dbReference type="KEGG" id="ocu:100008723"/>
<dbReference type="CTD" id="6446"/>
<dbReference type="eggNOG" id="KOG0598">
    <property type="taxonomic scope" value="Eukaryota"/>
</dbReference>
<dbReference type="GeneTree" id="ENSGT00940000155726"/>
<dbReference type="HOGENOM" id="CLU_000288_63_5_1"/>
<dbReference type="InParanoid" id="Q9XT18"/>
<dbReference type="OMA" id="CVIYDMM"/>
<dbReference type="OrthoDB" id="63267at2759"/>
<dbReference type="Proteomes" id="UP000001811">
    <property type="component" value="Chromosome 12"/>
</dbReference>
<dbReference type="Bgee" id="ENSOCUG00000014367">
    <property type="expression patterns" value="Expressed in ovary and 19 other cell types or tissues"/>
</dbReference>
<dbReference type="GO" id="GO:0005789">
    <property type="term" value="C:endoplasmic reticulum membrane"/>
    <property type="evidence" value="ECO:0007669"/>
    <property type="project" value="UniProtKB-SubCell"/>
</dbReference>
<dbReference type="GO" id="GO:0005739">
    <property type="term" value="C:mitochondrion"/>
    <property type="evidence" value="ECO:0007669"/>
    <property type="project" value="UniProtKB-SubCell"/>
</dbReference>
<dbReference type="GO" id="GO:0005634">
    <property type="term" value="C:nucleus"/>
    <property type="evidence" value="ECO:0007669"/>
    <property type="project" value="UniProtKB-SubCell"/>
</dbReference>
<dbReference type="GO" id="GO:0005886">
    <property type="term" value="C:plasma membrane"/>
    <property type="evidence" value="ECO:0007669"/>
    <property type="project" value="UniProtKB-SubCell"/>
</dbReference>
<dbReference type="GO" id="GO:0005524">
    <property type="term" value="F:ATP binding"/>
    <property type="evidence" value="ECO:0007669"/>
    <property type="project" value="UniProtKB-KW"/>
</dbReference>
<dbReference type="GO" id="GO:0106310">
    <property type="term" value="F:protein serine kinase activity"/>
    <property type="evidence" value="ECO:0007669"/>
    <property type="project" value="RHEA"/>
</dbReference>
<dbReference type="GO" id="GO:0004674">
    <property type="term" value="F:protein serine/threonine kinase activity"/>
    <property type="evidence" value="ECO:0007669"/>
    <property type="project" value="UniProtKB-KW"/>
</dbReference>
<dbReference type="GO" id="GO:0006915">
    <property type="term" value="P:apoptotic process"/>
    <property type="evidence" value="ECO:0007669"/>
    <property type="project" value="UniProtKB-KW"/>
</dbReference>
<dbReference type="CDD" id="cd05575">
    <property type="entry name" value="STKc_SGK"/>
    <property type="match status" value="1"/>
</dbReference>
<dbReference type="FunFam" id="1.10.510.10:FF:000065">
    <property type="entry name" value="Non-specific serine/threonine protein kinase"/>
    <property type="match status" value="1"/>
</dbReference>
<dbReference type="FunFam" id="3.30.200.20:FF:000030">
    <property type="entry name" value="Non-specific serine/threonine protein kinase"/>
    <property type="match status" value="1"/>
</dbReference>
<dbReference type="Gene3D" id="3.30.200.20">
    <property type="entry name" value="Phosphorylase Kinase, domain 1"/>
    <property type="match status" value="1"/>
</dbReference>
<dbReference type="Gene3D" id="1.10.510.10">
    <property type="entry name" value="Transferase(Phosphotransferase) domain 1"/>
    <property type="match status" value="1"/>
</dbReference>
<dbReference type="InterPro" id="IPR000961">
    <property type="entry name" value="AGC-kinase_C"/>
</dbReference>
<dbReference type="InterPro" id="IPR011009">
    <property type="entry name" value="Kinase-like_dom_sf"/>
</dbReference>
<dbReference type="InterPro" id="IPR017892">
    <property type="entry name" value="Pkinase_C"/>
</dbReference>
<dbReference type="InterPro" id="IPR000719">
    <property type="entry name" value="Prot_kinase_dom"/>
</dbReference>
<dbReference type="InterPro" id="IPR017441">
    <property type="entry name" value="Protein_kinase_ATP_BS"/>
</dbReference>
<dbReference type="InterPro" id="IPR008271">
    <property type="entry name" value="Ser/Thr_kinase_AS"/>
</dbReference>
<dbReference type="PANTHER" id="PTHR24351">
    <property type="entry name" value="RIBOSOMAL PROTEIN S6 KINASE"/>
    <property type="match status" value="1"/>
</dbReference>
<dbReference type="Pfam" id="PF00069">
    <property type="entry name" value="Pkinase"/>
    <property type="match status" value="1"/>
</dbReference>
<dbReference type="Pfam" id="PF00433">
    <property type="entry name" value="Pkinase_C"/>
    <property type="match status" value="1"/>
</dbReference>
<dbReference type="SMART" id="SM00133">
    <property type="entry name" value="S_TK_X"/>
    <property type="match status" value="1"/>
</dbReference>
<dbReference type="SMART" id="SM00220">
    <property type="entry name" value="S_TKc"/>
    <property type="match status" value="1"/>
</dbReference>
<dbReference type="SUPFAM" id="SSF56112">
    <property type="entry name" value="Protein kinase-like (PK-like)"/>
    <property type="match status" value="1"/>
</dbReference>
<dbReference type="PROSITE" id="PS51285">
    <property type="entry name" value="AGC_KINASE_CTER"/>
    <property type="match status" value="1"/>
</dbReference>
<dbReference type="PROSITE" id="PS00107">
    <property type="entry name" value="PROTEIN_KINASE_ATP"/>
    <property type="match status" value="1"/>
</dbReference>
<dbReference type="PROSITE" id="PS50011">
    <property type="entry name" value="PROTEIN_KINASE_DOM"/>
    <property type="match status" value="1"/>
</dbReference>
<dbReference type="PROSITE" id="PS00108">
    <property type="entry name" value="PROTEIN_KINASE_ST"/>
    <property type="match status" value="1"/>
</dbReference>
<sequence length="431" mass="48999">MTVKTEAARGPLTYSRMRGMVAILIAFMKQRRMGLNDFIQKIANNSYACKHTEVQSILKISQPQEPELMNANPSPPPSPSQQINLGPSSNPHAKPSDFHFLKVIGKGSFGKVLLARHKAEEAFYAVKVLQKKAILKKKEEKHIMSERNVLLKNVKHPFLVGLHFSFQTADKLYFVLDYINGGELFYHLQRERCFLEPRARFYAAEIASALGYLHSLNIVYRDLKPENILLDSQGHIVLTDFGLCKENIEHNGTTSTFCGTPEYLAPEVLHKQPYDRTVDWWCLGAVLYEMLYGLPPFYSRNTAEMYDNILNKPLQLKPNITNSARHLLEGLLQKDRTKRLGAKDDFMEIRNHVFFSLINWDDLINKKITPPFNPNVSGPSDLRHFDPEFTEEPVPSSIGRSPDSILITASVKEAAEAFLGFSYAPPMDSFL</sequence>
<organism>
    <name type="scientific">Oryctolagus cuniculus</name>
    <name type="common">Rabbit</name>
    <dbReference type="NCBI Taxonomy" id="9986"/>
    <lineage>
        <taxon>Eukaryota</taxon>
        <taxon>Metazoa</taxon>
        <taxon>Chordata</taxon>
        <taxon>Craniata</taxon>
        <taxon>Vertebrata</taxon>
        <taxon>Euteleostomi</taxon>
        <taxon>Mammalia</taxon>
        <taxon>Eutheria</taxon>
        <taxon>Euarchontoglires</taxon>
        <taxon>Glires</taxon>
        <taxon>Lagomorpha</taxon>
        <taxon>Leporidae</taxon>
        <taxon>Oryctolagus</taxon>
    </lineage>
</organism>
<name>SGK1_RABIT</name>
<reference key="1">
    <citation type="journal article" date="1999" name="J. Biol. Chem.">
        <title>sgk is an aldosterone-induced kinase in the renal collecting duct. Effects on epithelial Na+ channels.</title>
        <authorList>
            <person name="Naray-Fejes-Toth A."/>
            <person name="Canessa C."/>
            <person name="Cleaveland E.S."/>
            <person name="Aldrich G."/>
            <person name="Fejes-Toth G."/>
        </authorList>
    </citation>
    <scope>NUCLEOTIDE SEQUENCE [MRNA]</scope>
    <source>
        <strain>New Zealand white</strain>
    </source>
</reference>
<accession>Q9XT18</accession>
<gene>
    <name type="primary">SGK1</name>
    <name type="synonym">SGK</name>
</gene>
<feature type="chain" id="PRO_0000086644" description="Serine/threonine-protein kinase Sgk1">
    <location>
        <begin position="1"/>
        <end position="431"/>
    </location>
</feature>
<feature type="domain" description="Protein kinase" evidence="4">
    <location>
        <begin position="98"/>
        <end position="355"/>
    </location>
</feature>
<feature type="domain" description="AGC-kinase C-terminal" evidence="5">
    <location>
        <begin position="356"/>
        <end position="431"/>
    </location>
</feature>
<feature type="region of interest" description="Necessary for localization to the mitochondria" evidence="1">
    <location>
        <begin position="1"/>
        <end position="60"/>
    </location>
</feature>
<feature type="region of interest" description="Disordered" evidence="7">
    <location>
        <begin position="66"/>
        <end position="92"/>
    </location>
</feature>
<feature type="short sequence motif" description="Nuclear localization signal" evidence="1">
    <location>
        <begin position="131"/>
        <end position="141"/>
    </location>
</feature>
<feature type="compositionally biased region" description="Polar residues" evidence="7">
    <location>
        <begin position="81"/>
        <end position="91"/>
    </location>
</feature>
<feature type="active site" description="Proton acceptor" evidence="4 6">
    <location>
        <position position="222"/>
    </location>
</feature>
<feature type="binding site" evidence="4">
    <location>
        <begin position="104"/>
        <end position="112"/>
    </location>
    <ligand>
        <name>ATP</name>
        <dbReference type="ChEBI" id="CHEBI:30616"/>
    </ligand>
</feature>
<feature type="binding site" evidence="4">
    <location>
        <position position="127"/>
    </location>
    <ligand>
        <name>ATP</name>
        <dbReference type="ChEBI" id="CHEBI:30616"/>
    </ligand>
</feature>
<feature type="modified residue" description="Phosphoserine" evidence="2">
    <location>
        <position position="74"/>
    </location>
</feature>
<feature type="modified residue" description="Phosphoserine; by MAPK7" evidence="2">
    <location>
        <position position="78"/>
    </location>
</feature>
<feature type="modified residue" description="Phosphothreonine; by PDPK1" evidence="2">
    <location>
        <position position="256"/>
    </location>
</feature>
<feature type="modified residue" description="Phosphothreonine; by PKA" evidence="2">
    <location>
        <position position="369"/>
    </location>
</feature>
<feature type="modified residue" description="Phosphoserine" evidence="2">
    <location>
        <position position="397"/>
    </location>
</feature>
<feature type="modified residue" description="Phosphoserine" evidence="2">
    <location>
        <position position="401"/>
    </location>
</feature>
<feature type="modified residue" description="Phosphoserine" evidence="2">
    <location>
        <position position="422"/>
    </location>
</feature>
<feature type="disulfide bond" description="Interchain (with C-258)" evidence="2">
    <location>
        <position position="193"/>
    </location>
</feature>
<feature type="disulfide bond" description="Interchain (with C-193)" evidence="2">
    <location>
        <position position="258"/>
    </location>
</feature>
<comment type="function">
    <text evidence="1">Serine/threonine-protein kinase which is involved in the regulation of a wide variety of ion channels, membrane transporters, cellular enzymes, transcription factors, neuronal excitability, cell growth, proliferation, survival, migration and apoptosis. Plays an important role in cellular stress response. Contributes to regulation of renal Na(+) retention, renal K(+) elimination, salt appetite, gastric acid secretion, intestinal Na(+)/H(+) exchange and nutrient transport, insulin-dependent salt sensitivity of blood pressure, salt sensitivity of peripheral glucose uptake, cardiac repolarization and memory consolidation. Up-regulates Na(+) channels: SCNN1A/ENAC, SCN5A and ASIC1/ACCN2, K(+) channels: KCNJ1/ROMK1, KCNA1-5, KCNQ1-5 and KCNE1, epithelial Ca(2+) channels: TRPV5 and TRPV6, chloride channels: BSND, CLCN2 and CFTR, glutamate transporters: SLC1A3/EAAT1, SLC1A2 /EAAT2, SLC1A1/EAAT3, SLC1A6/EAAT4 and SLC1A7/EAAT5, amino acid transporters: SLC1A5/ASCT2, SLC38A1/SN1 and SLC6A19, creatine transporter: SLC6A8, Na(+)/dicarboxylate cotransporter: SLC13A2/NADC1, Na(+)-dependent phosphate cotransporter: SLC34A2/NAPI-2B, glutamate receptor: GRIK2/GLUR6. Up-regulates carriers: SLC9A3/NHE3, SLC12A1/NKCC2, SLC12A3/NCC, SLC5A3/SMIT, SLC2A1/GLUT1, SLC5A1/SGLT1 and SLC15A2/PEPT2. Regulates enzymes: GSK3A/B, PMM2 and Na(+)/K(+) ATPase, and transcription factors: CTNNB1 and nuclear factor NF-kappa-B. Stimulates sodium transport into epithelial cells by enhancing the stability and expression of SCNN1A/ENAC. This is achieved by phosphorylating the NEDD4L ubiquitin E3 ligase, promoting its interaction with 14-3-3 proteins, thereby preventing it from binding to SCNN1A/ENAC and targeting it for degradation. Regulates store-operated Ca(+2) entry (SOCE) by stimulating ORAI1 and STIM1. Regulates KCNJ1/ROMK1 directly via its phosphorylation or indirectly via increased interaction with SLC9A3R2/NHERF2. Phosphorylates MDM2 and activates MDM2-dependent ubiquitination of p53/TP53. Phosphorylates MAPT/TAU and mediates microtubule depolymerization and neurite formation in hippocampal neurons. Phosphorylates SLC2A4/GLUT4 and up-regulates its activity. Phosphorylates APBB1/FE65 and promotes its localization to the nucleus. Phosphorylates MAPK1/ERK2 and activates it by enhancing its interaction with MAP2K1/MEK1 and MAP2K2/MEK2. Phosphorylates FBXW7 and plays an inhibitory role in the NOTCH1 signaling. Phosphorylates FOXO1 resulting in its relocalization from the nucleus to the cytoplasm. Phosphorylates FOXO3, promoting its exit from the nucleus and interference with FOXO3-dependent transcription. Phosphorylates BRAF and MAP3K3/MEKK3 and inhibits their activity. Phosphorylates SLC9A3/NHE3 in response to dexamethasone, resulting in its activation and increased localization at the cell membrane. Phosphorylates CREB1. Necessary for vascular remodeling during angiogenesis (By similarity).</text>
</comment>
<comment type="catalytic activity">
    <reaction>
        <text>L-seryl-[protein] + ATP = O-phospho-L-seryl-[protein] + ADP + H(+)</text>
        <dbReference type="Rhea" id="RHEA:17989"/>
        <dbReference type="Rhea" id="RHEA-COMP:9863"/>
        <dbReference type="Rhea" id="RHEA-COMP:11604"/>
        <dbReference type="ChEBI" id="CHEBI:15378"/>
        <dbReference type="ChEBI" id="CHEBI:29999"/>
        <dbReference type="ChEBI" id="CHEBI:30616"/>
        <dbReference type="ChEBI" id="CHEBI:83421"/>
        <dbReference type="ChEBI" id="CHEBI:456216"/>
        <dbReference type="EC" id="2.7.11.1"/>
    </reaction>
</comment>
<comment type="catalytic activity">
    <reaction>
        <text>L-threonyl-[protein] + ATP = O-phospho-L-threonyl-[protein] + ADP + H(+)</text>
        <dbReference type="Rhea" id="RHEA:46608"/>
        <dbReference type="Rhea" id="RHEA-COMP:11060"/>
        <dbReference type="Rhea" id="RHEA-COMP:11605"/>
        <dbReference type="ChEBI" id="CHEBI:15378"/>
        <dbReference type="ChEBI" id="CHEBI:30013"/>
        <dbReference type="ChEBI" id="CHEBI:30616"/>
        <dbReference type="ChEBI" id="CHEBI:61977"/>
        <dbReference type="ChEBI" id="CHEBI:456216"/>
        <dbReference type="EC" id="2.7.11.1"/>
    </reaction>
</comment>
<comment type="activity regulation">
    <text evidence="2 3">Two specific sites, one in the kinase domain (Thr-256) and the other in the C-terminal regulatory region (Ser-422), need to be phosphorylated for its full activation (By similarity). Phosphorylation at Ser-397 and Ser-401 are also essential for its activity (By similarity). Activated by WNK1, WNK2, WNK3 and WNK4; which promote phosphorylation by mTORC2 (By similarity).</text>
</comment>
<comment type="subunit">
    <text evidence="2">Homodimer; disulfide-linked. Forms a trimeric complex with FBXW7 and NOTCH1. Interacts with MAPK3/ERK1, MAPK1/ERK2, MAP2K1/MEK1, MAP2K2/MEK2, NEDD4, NEDD4L, MAPT/TAU, MAPK7, CREB1, SLC9A3R2/NHERF2 and KCNJ1/ROMK1. Associates with the mammalian target of rapamycin complex 2 (mTORC2) via an interaction with MAPKAP1/SIN1 (By similarity).</text>
</comment>
<comment type="subcellular location">
    <subcellularLocation>
        <location evidence="1">Cytoplasm</location>
    </subcellularLocation>
    <subcellularLocation>
        <location evidence="1">Nucleus</location>
    </subcellularLocation>
    <subcellularLocation>
        <location evidence="1">Endoplasmic reticulum membrane</location>
    </subcellularLocation>
    <subcellularLocation>
        <location evidence="1">Cell membrane</location>
    </subcellularLocation>
    <subcellularLocation>
        <location evidence="1">Mitochondrion</location>
    </subcellularLocation>
    <text evidence="1">The subcellular localization is controlled by the cell cycle, as well as by exposure to specific hormones and environmental stress stimuli. In proliferating cells, it shuttles between the nucleus and cytoplasm in synchrony with the cell cycle, and in serum/growth factor-stimulated cells it resides in the nucleus. In contrast, after exposure to environmental stress or treatment with glucocorticoids, it is detected in the cytoplasm and with certain stress conditions is associated with the mitochondria. In osmoregulation through the epithelial sodium channel, it can be localized to the cytoplasmic surface of the cell membrane. Nuclear, upon phosphorylation (By similarity).</text>
</comment>
<comment type="PTM">
    <text evidence="1">Regulated by phosphorylation. Activated by phosphorylation on Ser-422 by mTORC2, transforming it into a substrate for PDPK1 which phosphorylates it on Thr-256. Phosphorylation on Ser-397 and Ser-401 are also essential for its activity. Phosphorylation on Ser-78 by MAPK7 is required for growth factor-induced cell cycle progression (By similarity).</text>
</comment>
<comment type="PTM">
    <text evidence="1">Ubiquitinated by NEDD4L; which promotes proteasomal degradation. Ubiquitinated by SYVN1 at the endoplasmic reticulum; which promotes rapid proteasomal degradation and maintains a high turnover rate in resting cells (By similarity).</text>
</comment>
<comment type="similarity">
    <text evidence="8">Belongs to the protein kinase superfamily. AGC Ser/Thr protein kinase family.</text>
</comment>
<protein>
    <recommendedName>
        <fullName>Serine/threonine-protein kinase Sgk1</fullName>
        <ecNumber>2.7.11.1</ecNumber>
    </recommendedName>
    <alternativeName>
        <fullName>Serum/glucocorticoid-regulated kinase 1</fullName>
    </alternativeName>
</protein>
<keyword id="KW-0053">Apoptosis</keyword>
<keyword id="KW-0067">ATP-binding</keyword>
<keyword id="KW-1003">Cell membrane</keyword>
<keyword id="KW-0963">Cytoplasm</keyword>
<keyword id="KW-1015">Disulfide bond</keyword>
<keyword id="KW-0256">Endoplasmic reticulum</keyword>
<keyword id="KW-0418">Kinase</keyword>
<keyword id="KW-0472">Membrane</keyword>
<keyword id="KW-0496">Mitochondrion</keyword>
<keyword id="KW-0547">Nucleotide-binding</keyword>
<keyword id="KW-0539">Nucleus</keyword>
<keyword id="KW-0597">Phosphoprotein</keyword>
<keyword id="KW-1185">Reference proteome</keyword>
<keyword id="KW-0723">Serine/threonine-protein kinase</keyword>
<keyword id="KW-0346">Stress response</keyword>
<keyword id="KW-0808">Transferase</keyword>
<keyword id="KW-0832">Ubl conjugation</keyword>
<evidence type="ECO:0000250" key="1"/>
<evidence type="ECO:0000250" key="2">
    <source>
        <dbReference type="UniProtKB" id="O00141"/>
    </source>
</evidence>
<evidence type="ECO:0000250" key="3">
    <source>
        <dbReference type="UniProtKB" id="Q9WVC6"/>
    </source>
</evidence>
<evidence type="ECO:0000255" key="4">
    <source>
        <dbReference type="PROSITE-ProRule" id="PRU00159"/>
    </source>
</evidence>
<evidence type="ECO:0000255" key="5">
    <source>
        <dbReference type="PROSITE-ProRule" id="PRU00618"/>
    </source>
</evidence>
<evidence type="ECO:0000255" key="6">
    <source>
        <dbReference type="PROSITE-ProRule" id="PRU10027"/>
    </source>
</evidence>
<evidence type="ECO:0000256" key="7">
    <source>
        <dbReference type="SAM" id="MobiDB-lite"/>
    </source>
</evidence>
<evidence type="ECO:0000305" key="8"/>